<comment type="function">
    <text evidence="1">Processive glucosyltransferase involved in the biosynthesis of both the bilayer- and non-bilayer-forming membrane glucolipids. Is able to successively transfer two glucosyl residues to diacylglycerol (DAG), thereby catalyzing the formation of beta-monoglucosyl-DAG (3-O-(beta-D-glucopyranosyl)-1,2-diacyl-sn-glycerol) and beta-diglucosyl-DAG (3-O-(beta-D-glucopyranosyl-beta-(1-&gt;6)-D-glucopyranosyl)-1,2-diacyl-sn-glycerol). Beta-diglucosyl-DAG is the predominant glycolipid found in Bacillales and is also used as a membrane anchor for lipoteichoic acid (LTA).</text>
</comment>
<comment type="catalytic activity">
    <reaction>
        <text>a 1,2-diacyl-3-O-(beta-D-glucopyranosyl)-sn-glycerol + UDP-alpha-D-glucose = a 1,2-diacyl-3-O-(beta-D-Glc-(1-&gt;6)-beta-D-Glc)-sn-glycerol + UDP + H(+)</text>
        <dbReference type="Rhea" id="RHEA:39031"/>
        <dbReference type="ChEBI" id="CHEBI:15378"/>
        <dbReference type="ChEBI" id="CHEBI:58223"/>
        <dbReference type="ChEBI" id="CHEBI:58885"/>
        <dbReference type="ChEBI" id="CHEBI:75799"/>
        <dbReference type="ChEBI" id="CHEBI:76264"/>
        <dbReference type="EC" id="2.4.1.315"/>
    </reaction>
</comment>
<comment type="catalytic activity">
    <reaction evidence="1">
        <text>a 1,2-diacyl-sn-glycerol + UDP-alpha-D-glucose = a 1,2-diacyl-3-O-(beta-D-glucopyranosyl)-sn-glycerol + UDP + H(+)</text>
        <dbReference type="Rhea" id="RHEA:17285"/>
        <dbReference type="ChEBI" id="CHEBI:15378"/>
        <dbReference type="ChEBI" id="CHEBI:17815"/>
        <dbReference type="ChEBI" id="CHEBI:58223"/>
        <dbReference type="ChEBI" id="CHEBI:58885"/>
        <dbReference type="ChEBI" id="CHEBI:75799"/>
    </reaction>
</comment>
<comment type="pathway">
    <text evidence="1">Glycolipid metabolism; diglucosyl-diacylglycerol biosynthesis.</text>
</comment>
<comment type="subcellular location">
    <subcellularLocation>
        <location evidence="1">Cell membrane</location>
    </subcellularLocation>
</comment>
<comment type="similarity">
    <text evidence="1">Belongs to the glycosyltransferase 28 family. UgtP subfamily.</text>
</comment>
<organism>
    <name type="scientific">Staphylococcus saprophyticus subsp. saprophyticus (strain ATCC 15305 / DSM 20229 / NCIMB 8711 / NCTC 7292 / S-41)</name>
    <dbReference type="NCBI Taxonomy" id="342451"/>
    <lineage>
        <taxon>Bacteria</taxon>
        <taxon>Bacillati</taxon>
        <taxon>Bacillota</taxon>
        <taxon>Bacilli</taxon>
        <taxon>Bacillales</taxon>
        <taxon>Staphylococcaceae</taxon>
        <taxon>Staphylococcus</taxon>
    </lineage>
</organism>
<reference key="1">
    <citation type="journal article" date="2005" name="Proc. Natl. Acad. Sci. U.S.A.">
        <title>Whole genome sequence of Staphylococcus saprophyticus reveals the pathogenesis of uncomplicated urinary tract infection.</title>
        <authorList>
            <person name="Kuroda M."/>
            <person name="Yamashita A."/>
            <person name="Hirakawa H."/>
            <person name="Kumano M."/>
            <person name="Morikawa K."/>
            <person name="Higashide M."/>
            <person name="Maruyama A."/>
            <person name="Inose Y."/>
            <person name="Matoba K."/>
            <person name="Toh H."/>
            <person name="Kuhara S."/>
            <person name="Hattori M."/>
            <person name="Ohta T."/>
        </authorList>
    </citation>
    <scope>NUCLEOTIDE SEQUENCE [LARGE SCALE GENOMIC DNA]</scope>
    <source>
        <strain>ATCC 15305 / DSM 20229 / NCIMB 8711 / NCTC 7292 / S-41</strain>
    </source>
</reference>
<feature type="chain" id="PRO_0000308463" description="Processive diacylglycerol beta-glucosyltransferase">
    <location>
        <begin position="1"/>
        <end position="391"/>
    </location>
</feature>
<name>UGTP_STAS1</name>
<proteinExistence type="inferred from homology"/>
<sequence length="391" mass="44665">MVTQNKKILIITGSFGNGHLQVTQSVVNQFKEMNLDNLTVIEHDLFLEAHPILTSICKKWYINSFKYFRNMYKAFYYSQPDQLDKCFYKYYGLNKLMNLLLKEKPDLILLTFPTPVMSVLTEQFDMNIPIATVMTDYRMQKNWITPFSQRYYLATEELKDEFASIGIPKDKLKVTGIPISDKFETDIDKTAWLSQNHLDPDKPTILMSAGAFGVSKGFGQMIQEILNRSPHAQVVMICGKNKDLKRSLTSQFKDFNNVLILGYTKHMNEWMASSQLMITKPGGITISEALTRQIPMIFLDPAPGQELENAVYFEEKGYGRIANTPEAAIEQVAALTNAPTKLASMSESMDASRIPYSTYKLCKDLLNLLNHSSHYEEVYGKVPLYAKLFVK</sequence>
<protein>
    <recommendedName>
        <fullName evidence="1">Processive diacylglycerol beta-glucosyltransferase</fullName>
        <ecNumber>2.4.1.315</ecNumber>
    </recommendedName>
    <alternativeName>
        <fullName evidence="1">Beta-diglucosyldiacylglycerol synthase</fullName>
        <shortName evidence="1">Beta-DGS</shortName>
        <shortName evidence="1">DGlcDAG synthase</shortName>
        <shortName evidence="1">Glc2-DAG synthase</shortName>
    </alternativeName>
    <alternativeName>
        <fullName evidence="1">Beta-gentiobiosyldiacylglycerol synthase</fullName>
    </alternativeName>
    <alternativeName>
        <fullName evidence="1">Beta-monoglucosyldiacylglycerol synthase</fullName>
        <shortName evidence="1">Beta-MGS</shortName>
        <shortName evidence="1">MGlcDAG synthase</shortName>
    </alternativeName>
    <alternativeName>
        <fullName>Diglucosyl diacylglycerol synthase (1,6-linking)</fullName>
    </alternativeName>
    <alternativeName>
        <fullName evidence="1">Glucosyl-beta-1,6-glucosyldiacylglycerol synthase</fullName>
    </alternativeName>
    <alternativeName>
        <fullName evidence="1">UDP glucosyltransferase</fullName>
    </alternativeName>
    <alternativeName>
        <fullName evidence="1">UDP-glucose:1,2-diacylglycerol-3-beta-D-glucosyltransferase</fullName>
    </alternativeName>
</protein>
<keyword id="KW-0119">Carbohydrate metabolism</keyword>
<keyword id="KW-1003">Cell membrane</keyword>
<keyword id="KW-0328">Glycosyltransferase</keyword>
<keyword id="KW-0444">Lipid biosynthesis</keyword>
<keyword id="KW-0443">Lipid metabolism</keyword>
<keyword id="KW-0472">Membrane</keyword>
<keyword id="KW-1185">Reference proteome</keyword>
<keyword id="KW-0808">Transferase</keyword>
<gene>
    <name evidence="1" type="primary">ugtP</name>
    <name type="ordered locus">SSP1768</name>
</gene>
<accession>Q49WE6</accession>
<evidence type="ECO:0000255" key="1">
    <source>
        <dbReference type="HAMAP-Rule" id="MF_01280"/>
    </source>
</evidence>
<dbReference type="EC" id="2.4.1.315"/>
<dbReference type="EMBL" id="AP008934">
    <property type="protein sequence ID" value="BAE18913.1"/>
    <property type="molecule type" value="Genomic_DNA"/>
</dbReference>
<dbReference type="RefSeq" id="WP_011303473.1">
    <property type="nucleotide sequence ID" value="NZ_MTGA01000039.1"/>
</dbReference>
<dbReference type="SMR" id="Q49WE6"/>
<dbReference type="CAZy" id="GT28">
    <property type="family name" value="Glycosyltransferase Family 28"/>
</dbReference>
<dbReference type="DNASU" id="3615395"/>
<dbReference type="GeneID" id="3615395"/>
<dbReference type="KEGG" id="ssp:SSP1768"/>
<dbReference type="PATRIC" id="fig|342451.11.peg.1764"/>
<dbReference type="eggNOG" id="COG0707">
    <property type="taxonomic scope" value="Bacteria"/>
</dbReference>
<dbReference type="HOGENOM" id="CLU_028367_0_1_9"/>
<dbReference type="OrthoDB" id="9815663at2"/>
<dbReference type="UniPathway" id="UPA00894"/>
<dbReference type="Proteomes" id="UP000006371">
    <property type="component" value="Chromosome"/>
</dbReference>
<dbReference type="GO" id="GO:0005886">
    <property type="term" value="C:plasma membrane"/>
    <property type="evidence" value="ECO:0007669"/>
    <property type="project" value="UniProtKB-SubCell"/>
</dbReference>
<dbReference type="GO" id="GO:0047228">
    <property type="term" value="F:1,2-diacylglycerol 3-glucosyltransferase activity"/>
    <property type="evidence" value="ECO:0007669"/>
    <property type="project" value="UniProtKB-UniRule"/>
</dbReference>
<dbReference type="GO" id="GO:0009246">
    <property type="term" value="P:enterobacterial common antigen biosynthetic process"/>
    <property type="evidence" value="ECO:0007669"/>
    <property type="project" value="UniProtKB-UniPathway"/>
</dbReference>
<dbReference type="GO" id="GO:0009247">
    <property type="term" value="P:glycolipid biosynthetic process"/>
    <property type="evidence" value="ECO:0007669"/>
    <property type="project" value="UniProtKB-UniRule"/>
</dbReference>
<dbReference type="GO" id="GO:0070395">
    <property type="term" value="P:lipoteichoic acid biosynthetic process"/>
    <property type="evidence" value="ECO:0007669"/>
    <property type="project" value="UniProtKB-UniRule"/>
</dbReference>
<dbReference type="CDD" id="cd17507">
    <property type="entry name" value="GT28_Beta-DGS-like"/>
    <property type="match status" value="1"/>
</dbReference>
<dbReference type="Gene3D" id="3.40.50.2000">
    <property type="entry name" value="Glycogen Phosphorylase B"/>
    <property type="match status" value="2"/>
</dbReference>
<dbReference type="HAMAP" id="MF_01280">
    <property type="entry name" value="Diacylglyc_glucosyltr"/>
    <property type="match status" value="1"/>
</dbReference>
<dbReference type="InterPro" id="IPR009695">
    <property type="entry name" value="Diacylglyc_glucosyltr_N"/>
</dbReference>
<dbReference type="InterPro" id="IPR007235">
    <property type="entry name" value="Glyco_trans_28_C"/>
</dbReference>
<dbReference type="InterPro" id="IPR050519">
    <property type="entry name" value="Glycosyltransf_28_UgtP"/>
</dbReference>
<dbReference type="InterPro" id="IPR023589">
    <property type="entry name" value="Pro_diacylglycrl_glcsylTrfase"/>
</dbReference>
<dbReference type="NCBIfam" id="NF010134">
    <property type="entry name" value="PRK13608.1"/>
    <property type="match status" value="1"/>
</dbReference>
<dbReference type="PANTHER" id="PTHR43025">
    <property type="entry name" value="MONOGALACTOSYLDIACYLGLYCEROL SYNTHASE"/>
    <property type="match status" value="1"/>
</dbReference>
<dbReference type="PANTHER" id="PTHR43025:SF3">
    <property type="entry name" value="MONOGALACTOSYLDIACYLGLYCEROL SYNTHASE 1, CHLOROPLASTIC"/>
    <property type="match status" value="1"/>
</dbReference>
<dbReference type="Pfam" id="PF04101">
    <property type="entry name" value="Glyco_tran_28_C"/>
    <property type="match status" value="1"/>
</dbReference>
<dbReference type="Pfam" id="PF06925">
    <property type="entry name" value="MGDG_synth"/>
    <property type="match status" value="1"/>
</dbReference>
<dbReference type="SUPFAM" id="SSF53756">
    <property type="entry name" value="UDP-Glycosyltransferase/glycogen phosphorylase"/>
    <property type="match status" value="1"/>
</dbReference>